<protein>
    <recommendedName>
        <fullName evidence="1">Large ribosomal subunit protein uL5</fullName>
    </recommendedName>
    <alternativeName>
        <fullName evidence="2">50S ribosomal protein L5</fullName>
    </alternativeName>
</protein>
<gene>
    <name evidence="1" type="primary">rplE</name>
    <name type="ordered locus">EAT1b_1621</name>
</gene>
<accession>C4KZN4</accession>
<feature type="chain" id="PRO_1000214630" description="Large ribosomal subunit protein uL5">
    <location>
        <begin position="1"/>
        <end position="179"/>
    </location>
</feature>
<sequence length="179" mass="20098">MNRLQEKYKSDIVKAMMDKFNYDSVMQVPKIEKIVINMGVGDAVSNSKALDMAVEELTILSGQKPLVTKAKKSIAGFKLREGMPIGAKVTLRGERMYDFLDKLVTVSLPRVRDFRGVSKKAFDGRGNYTLGVKEQLIFPEIDYDKVSKVRGMDIVVVTTANTDEEARELLTLLGMPFQK</sequence>
<keyword id="KW-0687">Ribonucleoprotein</keyword>
<keyword id="KW-0689">Ribosomal protein</keyword>
<keyword id="KW-0694">RNA-binding</keyword>
<keyword id="KW-0699">rRNA-binding</keyword>
<keyword id="KW-0820">tRNA-binding</keyword>
<reference key="1">
    <citation type="journal article" date="2011" name="J. Bacteriol.">
        <title>Complete genome sequence of the Thermophilic Bacterium Exiguobacterium sp. AT1b.</title>
        <authorList>
            <person name="Vishnivetskaya T.A."/>
            <person name="Lucas S."/>
            <person name="Copeland A."/>
            <person name="Lapidus A."/>
            <person name="Glavina del Rio T."/>
            <person name="Dalin E."/>
            <person name="Tice H."/>
            <person name="Bruce D.C."/>
            <person name="Goodwin L.A."/>
            <person name="Pitluck S."/>
            <person name="Saunders E."/>
            <person name="Brettin T."/>
            <person name="Detter C."/>
            <person name="Han C."/>
            <person name="Larimer F."/>
            <person name="Land M.L."/>
            <person name="Hauser L.J."/>
            <person name="Kyrpides N.C."/>
            <person name="Ovchinnikova G."/>
            <person name="Kathariou S."/>
            <person name="Ramaley R.F."/>
            <person name="Rodrigues D.F."/>
            <person name="Hendrix C."/>
            <person name="Richardson P."/>
            <person name="Tiedje J.M."/>
        </authorList>
    </citation>
    <scope>NUCLEOTIDE SEQUENCE [LARGE SCALE GENOMIC DNA]</scope>
    <source>
        <strain>ATCC BAA-1283 / AT1b</strain>
    </source>
</reference>
<comment type="function">
    <text evidence="1">This is one of the proteins that bind and probably mediate the attachment of the 5S RNA into the large ribosomal subunit, where it forms part of the central protuberance. In the 70S ribosome it contacts protein S13 of the 30S subunit (bridge B1b), connecting the 2 subunits; this bridge is implicated in subunit movement. Contacts the P site tRNA; the 5S rRNA and some of its associated proteins might help stabilize positioning of ribosome-bound tRNAs.</text>
</comment>
<comment type="subunit">
    <text evidence="1">Part of the 50S ribosomal subunit; part of the 5S rRNA/L5/L18/L25 subcomplex. Contacts the 5S rRNA and the P site tRNA. Forms a bridge to the 30S subunit in the 70S ribosome.</text>
</comment>
<comment type="similarity">
    <text evidence="1">Belongs to the universal ribosomal protein uL5 family.</text>
</comment>
<proteinExistence type="inferred from homology"/>
<name>RL5_EXISA</name>
<dbReference type="EMBL" id="CP001615">
    <property type="protein sequence ID" value="ACQ70547.1"/>
    <property type="molecule type" value="Genomic_DNA"/>
</dbReference>
<dbReference type="RefSeq" id="WP_012727665.1">
    <property type="nucleotide sequence ID" value="NZ_MOEL01000001.1"/>
</dbReference>
<dbReference type="SMR" id="C4KZN4"/>
<dbReference type="STRING" id="360911.EAT1b_1621"/>
<dbReference type="KEGG" id="eat:EAT1b_1621"/>
<dbReference type="eggNOG" id="COG0094">
    <property type="taxonomic scope" value="Bacteria"/>
</dbReference>
<dbReference type="HOGENOM" id="CLU_061015_2_1_9"/>
<dbReference type="OrthoDB" id="9806626at2"/>
<dbReference type="Proteomes" id="UP000000716">
    <property type="component" value="Chromosome"/>
</dbReference>
<dbReference type="GO" id="GO:1990904">
    <property type="term" value="C:ribonucleoprotein complex"/>
    <property type="evidence" value="ECO:0007669"/>
    <property type="project" value="UniProtKB-KW"/>
</dbReference>
<dbReference type="GO" id="GO:0005840">
    <property type="term" value="C:ribosome"/>
    <property type="evidence" value="ECO:0007669"/>
    <property type="project" value="UniProtKB-KW"/>
</dbReference>
<dbReference type="GO" id="GO:0019843">
    <property type="term" value="F:rRNA binding"/>
    <property type="evidence" value="ECO:0007669"/>
    <property type="project" value="UniProtKB-UniRule"/>
</dbReference>
<dbReference type="GO" id="GO:0003735">
    <property type="term" value="F:structural constituent of ribosome"/>
    <property type="evidence" value="ECO:0007669"/>
    <property type="project" value="InterPro"/>
</dbReference>
<dbReference type="GO" id="GO:0000049">
    <property type="term" value="F:tRNA binding"/>
    <property type="evidence" value="ECO:0007669"/>
    <property type="project" value="UniProtKB-UniRule"/>
</dbReference>
<dbReference type="GO" id="GO:0006412">
    <property type="term" value="P:translation"/>
    <property type="evidence" value="ECO:0007669"/>
    <property type="project" value="UniProtKB-UniRule"/>
</dbReference>
<dbReference type="FunFam" id="3.30.1440.10:FF:000001">
    <property type="entry name" value="50S ribosomal protein L5"/>
    <property type="match status" value="1"/>
</dbReference>
<dbReference type="Gene3D" id="3.30.1440.10">
    <property type="match status" value="1"/>
</dbReference>
<dbReference type="HAMAP" id="MF_01333_B">
    <property type="entry name" value="Ribosomal_uL5_B"/>
    <property type="match status" value="1"/>
</dbReference>
<dbReference type="InterPro" id="IPR002132">
    <property type="entry name" value="Ribosomal_uL5"/>
</dbReference>
<dbReference type="InterPro" id="IPR020930">
    <property type="entry name" value="Ribosomal_uL5_bac-type"/>
</dbReference>
<dbReference type="InterPro" id="IPR031309">
    <property type="entry name" value="Ribosomal_uL5_C"/>
</dbReference>
<dbReference type="InterPro" id="IPR020929">
    <property type="entry name" value="Ribosomal_uL5_CS"/>
</dbReference>
<dbReference type="InterPro" id="IPR022803">
    <property type="entry name" value="Ribosomal_uL5_dom_sf"/>
</dbReference>
<dbReference type="InterPro" id="IPR031310">
    <property type="entry name" value="Ribosomal_uL5_N"/>
</dbReference>
<dbReference type="NCBIfam" id="NF000585">
    <property type="entry name" value="PRK00010.1"/>
    <property type="match status" value="1"/>
</dbReference>
<dbReference type="PANTHER" id="PTHR11994">
    <property type="entry name" value="60S RIBOSOMAL PROTEIN L11-RELATED"/>
    <property type="match status" value="1"/>
</dbReference>
<dbReference type="Pfam" id="PF00281">
    <property type="entry name" value="Ribosomal_L5"/>
    <property type="match status" value="1"/>
</dbReference>
<dbReference type="Pfam" id="PF00673">
    <property type="entry name" value="Ribosomal_L5_C"/>
    <property type="match status" value="1"/>
</dbReference>
<dbReference type="PIRSF" id="PIRSF002161">
    <property type="entry name" value="Ribosomal_L5"/>
    <property type="match status" value="1"/>
</dbReference>
<dbReference type="SUPFAM" id="SSF55282">
    <property type="entry name" value="RL5-like"/>
    <property type="match status" value="1"/>
</dbReference>
<dbReference type="PROSITE" id="PS00358">
    <property type="entry name" value="RIBOSOMAL_L5"/>
    <property type="match status" value="1"/>
</dbReference>
<organism>
    <name type="scientific">Exiguobacterium sp. (strain ATCC BAA-1283 / AT1b)</name>
    <dbReference type="NCBI Taxonomy" id="360911"/>
    <lineage>
        <taxon>Bacteria</taxon>
        <taxon>Bacillati</taxon>
        <taxon>Bacillota</taxon>
        <taxon>Bacilli</taxon>
        <taxon>Bacillales</taxon>
        <taxon>Bacillales Family XII. Incertae Sedis</taxon>
        <taxon>Exiguobacterium</taxon>
    </lineage>
</organism>
<evidence type="ECO:0000255" key="1">
    <source>
        <dbReference type="HAMAP-Rule" id="MF_01333"/>
    </source>
</evidence>
<evidence type="ECO:0000305" key="2"/>